<keyword id="KW-0040">ANK repeat</keyword>
<keyword id="KW-0963">Cytoplasm</keyword>
<keyword id="KW-0378">Hydrolase</keyword>
<keyword id="KW-0460">Magnesium</keyword>
<keyword id="KW-0479">Metal-binding</keyword>
<keyword id="KW-0520">NAD</keyword>
<keyword id="KW-0521">NADP</keyword>
<keyword id="KW-0576">Peroxisome</keyword>
<keyword id="KW-1185">Reference proteome</keyword>
<keyword id="KW-0677">Repeat</keyword>
<keyword id="KW-0862">Zinc</keyword>
<protein>
    <recommendedName>
        <fullName evidence="4">NAD-capped RNA hydrolase NUDT12</fullName>
        <shortName evidence="4">DeNADding enzyme NUDT12</shortName>
        <ecNumber evidence="2">3.6.1.-</ecNumber>
    </recommendedName>
    <alternativeName>
        <fullName evidence="4">NADH pyrophosphatase NUDT12</fullName>
        <ecNumber evidence="1">3.6.1.22</ecNumber>
    </alternativeName>
    <alternativeName>
        <fullName evidence="4">Nucleoside diphosphate-linked moiety X motif 12</fullName>
        <shortName evidence="4">Nudix motif 12</shortName>
    </alternativeName>
</protein>
<accession>Q5RD76</accession>
<proteinExistence type="evidence at transcript level"/>
<organism>
    <name type="scientific">Pongo abelii</name>
    <name type="common">Sumatran orangutan</name>
    <name type="synonym">Pongo pygmaeus abelii</name>
    <dbReference type="NCBI Taxonomy" id="9601"/>
    <lineage>
        <taxon>Eukaryota</taxon>
        <taxon>Metazoa</taxon>
        <taxon>Chordata</taxon>
        <taxon>Craniata</taxon>
        <taxon>Vertebrata</taxon>
        <taxon>Euteleostomi</taxon>
        <taxon>Mammalia</taxon>
        <taxon>Eutheria</taxon>
        <taxon>Euarchontoglires</taxon>
        <taxon>Primates</taxon>
        <taxon>Haplorrhini</taxon>
        <taxon>Catarrhini</taxon>
        <taxon>Hominidae</taxon>
        <taxon>Pongo</taxon>
    </lineage>
</organism>
<reference key="1">
    <citation type="submission" date="2004-11" db="EMBL/GenBank/DDBJ databases">
        <authorList>
            <consortium name="The German cDNA consortium"/>
        </authorList>
    </citation>
    <scope>NUCLEOTIDE SEQUENCE [LARGE SCALE MRNA]</scope>
    <source>
        <tissue>Kidney</tissue>
    </source>
</reference>
<sequence length="462" mass="52100">MSSVKRTPKQEIVTQFHCSAAEGDIAKLTGILSHSPSLLNETSENGWTALMYAARNGHPEIVQFLLEKGCDRSIVNKSRQTALDIAVFWGYKHIANLLATAKGGKKPWFLTNEVEECENYFSKTLLDRKSEKRNNSDWLLAKESHPATVFILFSNLNPLVTLGGNKESFQQPEVRLCQLNYTDIKDYLAQPEKITLIFLGVELEIKDKLFNYAGEVPREEEDGLVAWFALGIDPIAAEEFKQRHENCYFLHPPMPALLQLKEKEAGVVAQARSVLAWYSRYKFCPTCGNATKIEEGGYKRVCLKEDCPSLNGVHNTSYPRVDPVVIMQVIHPDGTKCLLGRQKRFPPGMFTCLAGFIEPGETIEDAVRREVEEESGVKVGHVQYVACQPWPMPSSLMIGCLALAVSTEIKVDKNEIEDAHWFTREQVLDVLTKGKQQAFFVPPSRAIAHQLIKHWIRINPNL</sequence>
<name>NUD12_PONAB</name>
<dbReference type="EC" id="3.6.1.-" evidence="2"/>
<dbReference type="EC" id="3.6.1.22" evidence="1"/>
<dbReference type="EMBL" id="CR858040">
    <property type="protein sequence ID" value="CAH90281.1"/>
    <property type="molecule type" value="mRNA"/>
</dbReference>
<dbReference type="RefSeq" id="NP_001125127.1">
    <property type="nucleotide sequence ID" value="NM_001131655.1"/>
</dbReference>
<dbReference type="SMR" id="Q5RD76"/>
<dbReference type="FunCoup" id="Q5RD76">
    <property type="interactions" value="858"/>
</dbReference>
<dbReference type="STRING" id="9601.ENSPPYP00000017521"/>
<dbReference type="GeneID" id="100172011"/>
<dbReference type="KEGG" id="pon:100172011"/>
<dbReference type="CTD" id="83594"/>
<dbReference type="eggNOG" id="KOG0504">
    <property type="taxonomic scope" value="Eukaryota"/>
</dbReference>
<dbReference type="eggNOG" id="KOG3084">
    <property type="taxonomic scope" value="Eukaryota"/>
</dbReference>
<dbReference type="InParanoid" id="Q5RD76"/>
<dbReference type="OrthoDB" id="10249612at2759"/>
<dbReference type="Proteomes" id="UP000001595">
    <property type="component" value="Unplaced"/>
</dbReference>
<dbReference type="GO" id="GO:0005829">
    <property type="term" value="C:cytosol"/>
    <property type="evidence" value="ECO:0007669"/>
    <property type="project" value="TreeGrafter"/>
</dbReference>
<dbReference type="GO" id="GO:0005777">
    <property type="term" value="C:peroxisome"/>
    <property type="evidence" value="ECO:0007669"/>
    <property type="project" value="UniProtKB-SubCell"/>
</dbReference>
<dbReference type="GO" id="GO:0000287">
    <property type="term" value="F:magnesium ion binding"/>
    <property type="evidence" value="ECO:0000250"/>
    <property type="project" value="UniProtKB"/>
</dbReference>
<dbReference type="GO" id="GO:0000210">
    <property type="term" value="F:NAD+ diphosphatase activity"/>
    <property type="evidence" value="ECO:0007669"/>
    <property type="project" value="RHEA"/>
</dbReference>
<dbReference type="GO" id="GO:0035529">
    <property type="term" value="F:NADH pyrophosphatase activity"/>
    <property type="evidence" value="ECO:0007669"/>
    <property type="project" value="TreeGrafter"/>
</dbReference>
<dbReference type="GO" id="GO:0010943">
    <property type="term" value="F:NADPH pyrophosphatase activity"/>
    <property type="evidence" value="ECO:0007669"/>
    <property type="project" value="RHEA"/>
</dbReference>
<dbReference type="GO" id="GO:0110153">
    <property type="term" value="F:RNA NAD-cap (NMN-forming) hydrolase activity"/>
    <property type="evidence" value="ECO:0000250"/>
    <property type="project" value="UniProtKB"/>
</dbReference>
<dbReference type="GO" id="GO:0008270">
    <property type="term" value="F:zinc ion binding"/>
    <property type="evidence" value="ECO:0000250"/>
    <property type="project" value="UniProtKB"/>
</dbReference>
<dbReference type="GO" id="GO:0032922">
    <property type="term" value="P:circadian regulation of gene expression"/>
    <property type="evidence" value="ECO:0000250"/>
    <property type="project" value="UniProtKB"/>
</dbReference>
<dbReference type="GO" id="GO:0006402">
    <property type="term" value="P:mRNA catabolic process"/>
    <property type="evidence" value="ECO:0000250"/>
    <property type="project" value="UniProtKB"/>
</dbReference>
<dbReference type="GO" id="GO:0019677">
    <property type="term" value="P:NAD catabolic process"/>
    <property type="evidence" value="ECO:0007669"/>
    <property type="project" value="TreeGrafter"/>
</dbReference>
<dbReference type="GO" id="GO:0110155">
    <property type="term" value="P:NAD-cap decapping"/>
    <property type="evidence" value="ECO:0000250"/>
    <property type="project" value="UniProtKB"/>
</dbReference>
<dbReference type="GO" id="GO:0006734">
    <property type="term" value="P:NADH metabolic process"/>
    <property type="evidence" value="ECO:0007669"/>
    <property type="project" value="TreeGrafter"/>
</dbReference>
<dbReference type="GO" id="GO:0006742">
    <property type="term" value="P:NADP catabolic process"/>
    <property type="evidence" value="ECO:0007669"/>
    <property type="project" value="TreeGrafter"/>
</dbReference>
<dbReference type="CDD" id="cd03429">
    <property type="entry name" value="NUDIX_NADH_pyrophosphatase_Nudt13"/>
    <property type="match status" value="1"/>
</dbReference>
<dbReference type="FunFam" id="1.25.40.20:FF:001067">
    <property type="entry name" value="Nudix (Nucleoside diphosphate linked moiety X)-type motif 12 (Predicted)"/>
    <property type="match status" value="1"/>
</dbReference>
<dbReference type="FunFam" id="3.90.79.10:FF:000023">
    <property type="entry name" value="Peroxisomal NADH pyrophosphatase NUDT12"/>
    <property type="match status" value="1"/>
</dbReference>
<dbReference type="FunFam" id="3.90.79.20:FF:000002">
    <property type="entry name" value="Peroxisomal NADH pyrophosphatase NUDT12"/>
    <property type="match status" value="1"/>
</dbReference>
<dbReference type="Gene3D" id="3.90.79.20">
    <property type="match status" value="1"/>
</dbReference>
<dbReference type="Gene3D" id="1.25.40.20">
    <property type="entry name" value="Ankyrin repeat-containing domain"/>
    <property type="match status" value="1"/>
</dbReference>
<dbReference type="Gene3D" id="3.90.79.10">
    <property type="entry name" value="Nucleoside Triphosphate Pyrophosphohydrolase"/>
    <property type="match status" value="1"/>
</dbReference>
<dbReference type="InterPro" id="IPR002110">
    <property type="entry name" value="Ankyrin_rpt"/>
</dbReference>
<dbReference type="InterPro" id="IPR036770">
    <property type="entry name" value="Ankyrin_rpt-contain_sf"/>
</dbReference>
<dbReference type="InterPro" id="IPR050241">
    <property type="entry name" value="NAD-cap_RNA_hydrolase_NudC"/>
</dbReference>
<dbReference type="InterPro" id="IPR015375">
    <property type="entry name" value="NADH_PPase-like_N"/>
</dbReference>
<dbReference type="InterPro" id="IPR049734">
    <property type="entry name" value="NudC-like_C"/>
</dbReference>
<dbReference type="InterPro" id="IPR015797">
    <property type="entry name" value="NUDIX_hydrolase-like_dom_sf"/>
</dbReference>
<dbReference type="InterPro" id="IPR020084">
    <property type="entry name" value="NUDIX_hydrolase_CS"/>
</dbReference>
<dbReference type="InterPro" id="IPR000086">
    <property type="entry name" value="NUDIX_hydrolase_dom"/>
</dbReference>
<dbReference type="InterPro" id="IPR015376">
    <property type="entry name" value="Znr_NADH_PPase"/>
</dbReference>
<dbReference type="NCBIfam" id="NF001299">
    <property type="entry name" value="PRK00241.1"/>
    <property type="match status" value="1"/>
</dbReference>
<dbReference type="PANTHER" id="PTHR42904:SF6">
    <property type="entry name" value="NAD-CAPPED RNA HYDROLASE NUDT12"/>
    <property type="match status" value="1"/>
</dbReference>
<dbReference type="PANTHER" id="PTHR42904">
    <property type="entry name" value="NUDIX HYDROLASE, NUDC SUBFAMILY"/>
    <property type="match status" value="1"/>
</dbReference>
<dbReference type="Pfam" id="PF12796">
    <property type="entry name" value="Ank_2"/>
    <property type="match status" value="1"/>
</dbReference>
<dbReference type="Pfam" id="PF00293">
    <property type="entry name" value="NUDIX"/>
    <property type="match status" value="1"/>
</dbReference>
<dbReference type="Pfam" id="PF09296">
    <property type="entry name" value="NUDIX-like"/>
    <property type="match status" value="1"/>
</dbReference>
<dbReference type="Pfam" id="PF09297">
    <property type="entry name" value="Zn_ribbon_NUD"/>
    <property type="match status" value="1"/>
</dbReference>
<dbReference type="SMART" id="SM00248">
    <property type="entry name" value="ANK"/>
    <property type="match status" value="3"/>
</dbReference>
<dbReference type="SUPFAM" id="SSF48403">
    <property type="entry name" value="Ankyrin repeat"/>
    <property type="match status" value="1"/>
</dbReference>
<dbReference type="SUPFAM" id="SSF55811">
    <property type="entry name" value="Nudix"/>
    <property type="match status" value="1"/>
</dbReference>
<dbReference type="PROSITE" id="PS50297">
    <property type="entry name" value="ANK_REP_REGION"/>
    <property type="match status" value="1"/>
</dbReference>
<dbReference type="PROSITE" id="PS50088">
    <property type="entry name" value="ANK_REPEAT"/>
    <property type="match status" value="1"/>
</dbReference>
<dbReference type="PROSITE" id="PS51462">
    <property type="entry name" value="NUDIX"/>
    <property type="match status" value="1"/>
</dbReference>
<dbReference type="PROSITE" id="PS00893">
    <property type="entry name" value="NUDIX_BOX"/>
    <property type="match status" value="1"/>
</dbReference>
<evidence type="ECO:0000250" key="1">
    <source>
        <dbReference type="UniProtKB" id="Q9BQG2"/>
    </source>
</evidence>
<evidence type="ECO:0000250" key="2">
    <source>
        <dbReference type="UniProtKB" id="Q9DCN1"/>
    </source>
</evidence>
<evidence type="ECO:0000255" key="3">
    <source>
        <dbReference type="PROSITE-ProRule" id="PRU00794"/>
    </source>
</evidence>
<evidence type="ECO:0000305" key="4"/>
<gene>
    <name evidence="1" type="primary">NUDT12</name>
</gene>
<comment type="function">
    <text evidence="1 2">mRNA decapping enzyme that specifically removes the nicotinamide adenine dinucleotide (NAD) cap from a subset of mRNAs by hydrolyzing the diphosphate linkage to produce nicotinamide mononucleotide (NMN) and 5' monophosphate mRNA. The NAD-cap is present at the 5'-end of some RNAs; in contrast to the canonical N7 methylguanosine (m7G) cap, the NAD cap promotes mRNA decay. Preferentially acts on NAD-capped transcripts in response to nutrient stress (By similarity). Also acts on free nicotinamide adenine dinucleotide molecules: hydrolyzes NAD(H) into NMN(H) and AMP, and NADPH into NMNH and 2',5'-ADP. May act to regulate the concentration of peroxisomal nicotinamide nucleotide cofactors required for oxidative metabolism in this organelle (By similarity). Regulates the levels of circadian clock components PER1, PER2, PER3 and CRY2 in the liver (By similarity).</text>
</comment>
<comment type="catalytic activity">
    <reaction evidence="2">
        <text>a 5'-end NAD(+)-phospho-ribonucleoside in mRNA + H2O = a 5'-end phospho-adenosine-phospho-ribonucleoside in mRNA + beta-nicotinamide D-ribonucleotide + 2 H(+)</text>
        <dbReference type="Rhea" id="RHEA:60876"/>
        <dbReference type="Rhea" id="RHEA-COMP:15698"/>
        <dbReference type="Rhea" id="RHEA-COMP:15719"/>
        <dbReference type="ChEBI" id="CHEBI:14649"/>
        <dbReference type="ChEBI" id="CHEBI:15377"/>
        <dbReference type="ChEBI" id="CHEBI:15378"/>
        <dbReference type="ChEBI" id="CHEBI:144029"/>
        <dbReference type="ChEBI" id="CHEBI:144051"/>
    </reaction>
    <physiologicalReaction direction="left-to-right" evidence="2">
        <dbReference type="Rhea" id="RHEA:60877"/>
    </physiologicalReaction>
</comment>
<comment type="catalytic activity">
    <reaction evidence="1">
        <text>NAD(+) + H2O = beta-nicotinamide D-ribonucleotide + AMP + 2 H(+)</text>
        <dbReference type="Rhea" id="RHEA:11800"/>
        <dbReference type="ChEBI" id="CHEBI:14649"/>
        <dbReference type="ChEBI" id="CHEBI:15377"/>
        <dbReference type="ChEBI" id="CHEBI:15378"/>
        <dbReference type="ChEBI" id="CHEBI:57540"/>
        <dbReference type="ChEBI" id="CHEBI:456215"/>
        <dbReference type="EC" id="3.6.1.22"/>
    </reaction>
    <physiologicalReaction direction="left-to-right" evidence="1">
        <dbReference type="Rhea" id="RHEA:11801"/>
    </physiologicalReaction>
</comment>
<comment type="catalytic activity">
    <reaction evidence="1">
        <text>NADH + H2O = reduced beta-nicotinamide D-ribonucleotide + AMP + 2 H(+)</text>
        <dbReference type="Rhea" id="RHEA:48868"/>
        <dbReference type="ChEBI" id="CHEBI:15377"/>
        <dbReference type="ChEBI" id="CHEBI:15378"/>
        <dbReference type="ChEBI" id="CHEBI:57945"/>
        <dbReference type="ChEBI" id="CHEBI:90832"/>
        <dbReference type="ChEBI" id="CHEBI:456215"/>
        <dbReference type="EC" id="3.6.1.22"/>
    </reaction>
    <physiologicalReaction direction="left-to-right" evidence="1">
        <dbReference type="Rhea" id="RHEA:48869"/>
    </physiologicalReaction>
</comment>
<comment type="catalytic activity">
    <reaction evidence="1">
        <text>NADPH + H2O = reduced beta-nicotinamide D-ribonucleotide + adenosine 2',5'-bisphosphate + 2 H(+)</text>
        <dbReference type="Rhea" id="RHEA:60820"/>
        <dbReference type="ChEBI" id="CHEBI:15377"/>
        <dbReference type="ChEBI" id="CHEBI:15378"/>
        <dbReference type="ChEBI" id="CHEBI:57783"/>
        <dbReference type="ChEBI" id="CHEBI:90832"/>
        <dbReference type="ChEBI" id="CHEBI:194156"/>
    </reaction>
    <physiologicalReaction direction="left-to-right" evidence="1">
        <dbReference type="Rhea" id="RHEA:60821"/>
    </physiologicalReaction>
</comment>
<comment type="cofactor">
    <cofactor evidence="2">
        <name>Mg(2+)</name>
        <dbReference type="ChEBI" id="CHEBI:18420"/>
    </cofactor>
    <text evidence="2">Binds 3 Mg(2+) ions per subunit.</text>
</comment>
<comment type="cofactor">
    <cofactor evidence="2">
        <name>Zn(2+)</name>
        <dbReference type="ChEBI" id="CHEBI:29105"/>
    </cofactor>
    <text evidence="2">Binds 1 zinc ion per subunit.</text>
</comment>
<comment type="subunit">
    <text evidence="1 2">Homodimer (By similarity). Homodimerization is essential for its catalytic activity and protein stability (By similarity). Interacts (via ANK repeats) with BLMH (By similarity).</text>
</comment>
<comment type="subcellular location">
    <subcellularLocation>
        <location evidence="1">Cytoplasm</location>
    </subcellularLocation>
    <subcellularLocation>
        <location evidence="1">Peroxisome</location>
    </subcellularLocation>
    <subcellularLocation>
        <location evidence="1">Cytoplasmic granule</location>
    </subcellularLocation>
    <text evidence="1">Localizes to cytoplasmic granules in the presence of BLMH.</text>
</comment>
<comment type="similarity">
    <text evidence="4">Belongs to the Nudix hydrolase family. NudC subfamily.</text>
</comment>
<feature type="chain" id="PRO_0000056958" description="NAD-capped RNA hydrolase NUDT12">
    <location>
        <begin position="1"/>
        <end position="462"/>
    </location>
</feature>
<feature type="repeat" description="ANK 1">
    <location>
        <begin position="11"/>
        <end position="40"/>
    </location>
</feature>
<feature type="repeat" description="ANK 2">
    <location>
        <begin position="45"/>
        <end position="74"/>
    </location>
</feature>
<feature type="repeat" description="ANK 3">
    <location>
        <begin position="78"/>
        <end position="98"/>
    </location>
</feature>
<feature type="domain" description="Nudix hydrolase" evidence="3">
    <location>
        <begin position="319"/>
        <end position="453"/>
    </location>
</feature>
<feature type="short sequence motif" description="Nudix box">
    <location>
        <begin position="355"/>
        <end position="376"/>
    </location>
</feature>
<feature type="short sequence motif" description="Microbody targeting signal" evidence="1">
    <location>
        <begin position="460"/>
        <end position="462"/>
    </location>
</feature>
<feature type="binding site" evidence="2">
    <location>
        <position position="284"/>
    </location>
    <ligand>
        <name>Zn(2+)</name>
        <dbReference type="ChEBI" id="CHEBI:29105"/>
    </ligand>
</feature>
<feature type="binding site" evidence="2">
    <location>
        <position position="287"/>
    </location>
    <ligand>
        <name>Zn(2+)</name>
        <dbReference type="ChEBI" id="CHEBI:29105"/>
    </ligand>
</feature>
<feature type="binding site" evidence="2">
    <location>
        <position position="302"/>
    </location>
    <ligand>
        <name>Zn(2+)</name>
        <dbReference type="ChEBI" id="CHEBI:29105"/>
    </ligand>
</feature>
<feature type="binding site" evidence="2">
    <location>
        <position position="307"/>
    </location>
    <ligand>
        <name>Zn(2+)</name>
        <dbReference type="ChEBI" id="CHEBI:29105"/>
    </ligand>
</feature>
<feature type="binding site" evidence="2">
    <location>
        <position position="318"/>
    </location>
    <ligand>
        <name>substrate</name>
    </ligand>
</feature>
<feature type="binding site" evidence="2">
    <location>
        <begin position="354"/>
        <end position="356"/>
    </location>
    <ligand>
        <name>substrate</name>
    </ligand>
</feature>
<feature type="binding site" evidence="2">
    <location>
        <position position="354"/>
    </location>
    <ligand>
        <name>Mg(2+)</name>
        <dbReference type="ChEBI" id="CHEBI:18420"/>
        <label>1</label>
    </ligand>
</feature>
<feature type="binding site" evidence="2">
    <location>
        <position position="370"/>
    </location>
    <ligand>
        <name>Mg(2+)</name>
        <dbReference type="ChEBI" id="CHEBI:18420"/>
        <label>2</label>
    </ligand>
</feature>
<feature type="binding site" evidence="2">
    <location>
        <position position="370"/>
    </location>
    <ligand>
        <name>Mg(2+)</name>
        <dbReference type="ChEBI" id="CHEBI:18420"/>
        <label>3</label>
    </ligand>
</feature>
<feature type="binding site" evidence="2">
    <location>
        <position position="370"/>
    </location>
    <ligand>
        <name>substrate</name>
    </ligand>
</feature>
<feature type="binding site" evidence="2">
    <location>
        <position position="374"/>
    </location>
    <ligand>
        <name>Mg(2+)</name>
        <dbReference type="ChEBI" id="CHEBI:18420"/>
        <label>1</label>
    </ligand>
</feature>
<feature type="binding site" evidence="2">
    <location>
        <position position="374"/>
    </location>
    <ligand>
        <name>Mg(2+)</name>
        <dbReference type="ChEBI" id="CHEBI:18420"/>
        <label>3</label>
    </ligand>
</feature>
<feature type="binding site" evidence="2">
    <location>
        <position position="374"/>
    </location>
    <ligand>
        <name>substrate</name>
    </ligand>
</feature>
<feature type="binding site" evidence="2">
    <location>
        <position position="415"/>
    </location>
    <ligand>
        <name>Mg(2+)</name>
        <dbReference type="ChEBI" id="CHEBI:18420"/>
        <label>1</label>
    </ligand>
</feature>
<feature type="binding site" evidence="2">
    <location>
        <position position="415"/>
    </location>
    <ligand>
        <name>Mg(2+)</name>
        <dbReference type="ChEBI" id="CHEBI:18420"/>
        <label>3</label>
    </ligand>
</feature>
<feature type="binding site" evidence="2">
    <location>
        <position position="415"/>
    </location>
    <ligand>
        <name>substrate</name>
    </ligand>
</feature>
<feature type="modified residue" description="N6-succinyllysine" evidence="2">
    <location>
        <position position="185"/>
    </location>
</feature>
<feature type="modified residue" description="N6-succinyllysine" evidence="2">
    <location>
        <position position="292"/>
    </location>
</feature>